<proteinExistence type="evidence at protein level"/>
<dbReference type="EC" id="1.-.-.-"/>
<dbReference type="EMBL" id="Z28274">
    <property type="protein sequence ID" value="CAA82127.1"/>
    <property type="molecule type" value="Genomic_DNA"/>
</dbReference>
<dbReference type="EMBL" id="AY558316">
    <property type="protein sequence ID" value="AAS56642.1"/>
    <property type="molecule type" value="Genomic_DNA"/>
</dbReference>
<dbReference type="EMBL" id="BK006944">
    <property type="protein sequence ID" value="DAA09200.1"/>
    <property type="molecule type" value="Genomic_DNA"/>
</dbReference>
<dbReference type="PIR" id="S38123">
    <property type="entry name" value="S38123"/>
</dbReference>
<dbReference type="RefSeq" id="NP_012975.3">
    <property type="nucleotide sequence ID" value="NM_001179839.3"/>
</dbReference>
<dbReference type="PDB" id="1WPI">
    <property type="method" value="NMR"/>
    <property type="chains" value="A=1-133"/>
</dbReference>
<dbReference type="PDBsum" id="1WPI"/>
<dbReference type="BMRB" id="P36141"/>
<dbReference type="SMR" id="P36141"/>
<dbReference type="BioGRID" id="34180">
    <property type="interactions" value="93"/>
</dbReference>
<dbReference type="FunCoup" id="P36141">
    <property type="interactions" value="99"/>
</dbReference>
<dbReference type="IntAct" id="P36141">
    <property type="interactions" value="3"/>
</dbReference>
<dbReference type="MINT" id="P36141"/>
<dbReference type="STRING" id="4932.YKR049C"/>
<dbReference type="PaxDb" id="4932-YKR049C"/>
<dbReference type="PeptideAtlas" id="P36141"/>
<dbReference type="DNASU" id="853923"/>
<dbReference type="EnsemblFungi" id="YKR049C_mRNA">
    <property type="protein sequence ID" value="YKR049C"/>
    <property type="gene ID" value="YKR049C"/>
</dbReference>
<dbReference type="GeneID" id="853923"/>
<dbReference type="KEGG" id="sce:YKR049C"/>
<dbReference type="AGR" id="SGD:S000001757"/>
<dbReference type="SGD" id="S000001757">
    <property type="gene designation" value="FMP46"/>
</dbReference>
<dbReference type="VEuPathDB" id="FungiDB:YKR049C"/>
<dbReference type="eggNOG" id="ENOG502S4SU">
    <property type="taxonomic scope" value="Eukaryota"/>
</dbReference>
<dbReference type="HOGENOM" id="CLU_1939538_0_0_1"/>
<dbReference type="InParanoid" id="P36141"/>
<dbReference type="OMA" id="LWVDWEK"/>
<dbReference type="OrthoDB" id="4044803at2759"/>
<dbReference type="BioCyc" id="YEAST:G3O-32019-MONOMER"/>
<dbReference type="BioGRID-ORCS" id="853923">
    <property type="hits" value="5 hits in 10 CRISPR screens"/>
</dbReference>
<dbReference type="EvolutionaryTrace" id="P36141"/>
<dbReference type="PRO" id="PR:P36141"/>
<dbReference type="Proteomes" id="UP000002311">
    <property type="component" value="Chromosome XI"/>
</dbReference>
<dbReference type="RNAct" id="P36141">
    <property type="molecule type" value="protein"/>
</dbReference>
<dbReference type="GO" id="GO:0005739">
    <property type="term" value="C:mitochondrion"/>
    <property type="evidence" value="ECO:0007005"/>
    <property type="project" value="SGD"/>
</dbReference>
<dbReference type="GO" id="GO:0016491">
    <property type="term" value="F:oxidoreductase activity"/>
    <property type="evidence" value="ECO:0007669"/>
    <property type="project" value="UniProtKB-KW"/>
</dbReference>
<dbReference type="GO" id="GO:0051051">
    <property type="term" value="P:negative regulation of transport"/>
    <property type="evidence" value="ECO:0000315"/>
    <property type="project" value="SGD"/>
</dbReference>
<dbReference type="FunFam" id="3.40.30.10:FF:000409">
    <property type="entry name" value="Fmp46p"/>
    <property type="match status" value="1"/>
</dbReference>
<dbReference type="Gene3D" id="3.40.30.10">
    <property type="entry name" value="Glutaredoxin"/>
    <property type="match status" value="1"/>
</dbReference>
<dbReference type="InterPro" id="IPR012882">
    <property type="entry name" value="Fmp46"/>
</dbReference>
<dbReference type="InterPro" id="IPR036249">
    <property type="entry name" value="Thioredoxin-like_sf"/>
</dbReference>
<dbReference type="PANTHER" id="PTHR28071">
    <property type="entry name" value="REDOX PROTEIN FMP46, MITOCHONDRIAL-RELATED"/>
    <property type="match status" value="1"/>
</dbReference>
<dbReference type="PANTHER" id="PTHR28071:SF1">
    <property type="entry name" value="REDOX PROTEIN FMP46, MITOCHONDRIAL-RELATED"/>
    <property type="match status" value="1"/>
</dbReference>
<dbReference type="Pfam" id="PF07955">
    <property type="entry name" value="DUF1687"/>
    <property type="match status" value="1"/>
</dbReference>
<dbReference type="SUPFAM" id="SSF52833">
    <property type="entry name" value="Thioredoxin-like"/>
    <property type="match status" value="1"/>
</dbReference>
<comment type="function">
    <text>Putative mitochondrial redox protein which could be involved in the reduction of small toxic molecules.</text>
</comment>
<comment type="interaction">
    <interactant intactId="EBI-26445">
        <id>P36141</id>
    </interactant>
    <interactant intactId="EBI-16219">
        <id>P39940</id>
        <label>RSP5</label>
    </interactant>
    <organismsDiffer>false</organismsDiffer>
    <experiments>2</experiments>
</comment>
<comment type="subcellular location">
    <subcellularLocation>
        <location evidence="2 4">Mitochondrion</location>
    </subcellularLocation>
</comment>
<comment type="miscellaneous">
    <text evidence="3">Present with 1240 molecules/cell in log phase SD medium.</text>
</comment>
<comment type="similarity">
    <text evidence="5">Belongs to the FMP46 family.</text>
</comment>
<accession>P36141</accession>
<accession>D6VXB0</accession>
<feature type="transit peptide" description="Mitochondrion" evidence="1">
    <location>
        <begin position="1"/>
        <end position="21"/>
    </location>
</feature>
<feature type="chain" id="PRO_0000203215" description="Putative redox protein FMP46, mitochondrial">
    <location>
        <begin position="22"/>
        <end position="133"/>
    </location>
</feature>
<feature type="active site" evidence="5">
    <location>
        <position position="97"/>
    </location>
</feature>
<feature type="strand" evidence="6">
    <location>
        <begin position="13"/>
        <end position="18"/>
    </location>
</feature>
<feature type="strand" evidence="6">
    <location>
        <begin position="22"/>
        <end position="24"/>
    </location>
</feature>
<feature type="helix" evidence="6">
    <location>
        <begin position="27"/>
        <end position="31"/>
    </location>
</feature>
<feature type="turn" evidence="6">
    <location>
        <begin position="32"/>
        <end position="35"/>
    </location>
</feature>
<feature type="strand" evidence="6">
    <location>
        <begin position="41"/>
        <end position="48"/>
    </location>
</feature>
<feature type="helix" evidence="6">
    <location>
        <begin position="53"/>
        <end position="61"/>
    </location>
</feature>
<feature type="strand" evidence="6">
    <location>
        <begin position="62"/>
        <end position="65"/>
    </location>
</feature>
<feature type="helix" evidence="6">
    <location>
        <begin position="66"/>
        <end position="73"/>
    </location>
</feature>
<feature type="strand" evidence="6">
    <location>
        <begin position="74"/>
        <end position="76"/>
    </location>
</feature>
<feature type="helix" evidence="6">
    <location>
        <begin position="77"/>
        <end position="80"/>
    </location>
</feature>
<feature type="turn" evidence="6">
    <location>
        <begin position="81"/>
        <end position="85"/>
    </location>
</feature>
<feature type="helix" evidence="6">
    <location>
        <begin position="86"/>
        <end position="90"/>
    </location>
</feature>
<feature type="helix" evidence="6">
    <location>
        <begin position="95"/>
        <end position="98"/>
    </location>
</feature>
<feature type="strand" evidence="6">
    <location>
        <begin position="109"/>
        <end position="115"/>
    </location>
</feature>
<feature type="strand" evidence="6">
    <location>
        <begin position="118"/>
        <end position="122"/>
    </location>
</feature>
<feature type="helix" evidence="6">
    <location>
        <begin position="123"/>
        <end position="129"/>
    </location>
</feature>
<evidence type="ECO:0000255" key="1"/>
<evidence type="ECO:0000269" key="2">
    <source>
    </source>
</evidence>
<evidence type="ECO:0000269" key="3">
    <source>
    </source>
</evidence>
<evidence type="ECO:0000269" key="4">
    <source>
    </source>
</evidence>
<evidence type="ECO:0000305" key="5"/>
<evidence type="ECO:0007829" key="6">
    <source>
        <dbReference type="PDB" id="1WPI"/>
    </source>
</evidence>
<name>FMP46_YEAST</name>
<protein>
    <recommendedName>
        <fullName>Putative redox protein FMP46, mitochondrial</fullName>
        <ecNumber>1.-.-.-</ecNumber>
    </recommendedName>
    <alternativeName>
        <fullName>Found in mitochondrial proteome protein 46</fullName>
    </alternativeName>
</protein>
<gene>
    <name type="primary">FMP46</name>
    <name type="ordered locus">YKR049C</name>
</gene>
<keyword id="KW-0002">3D-structure</keyword>
<keyword id="KW-0496">Mitochondrion</keyword>
<keyword id="KW-0560">Oxidoreductase</keyword>
<keyword id="KW-1185">Reference proteome</keyword>
<keyword id="KW-0809">Transit peptide</keyword>
<sequence>MSFWKTLQRQPRTISLFTNDIASNIKSQKCLQLLKGDVSHRFDVEIANRFPTWDQLQYMRTSCPQGPVSLQRQIPKLDSVLKYKHTDPTFGMDLQKCVQRGLWNPKEALWVDWENKLVGNEPADIDKYIIQRK</sequence>
<reference key="1">
    <citation type="journal article" date="1994" name="Nature">
        <title>Complete DNA sequence of yeast chromosome XI.</title>
        <authorList>
            <person name="Dujon B."/>
            <person name="Alexandraki D."/>
            <person name="Andre B."/>
            <person name="Ansorge W."/>
            <person name="Baladron V."/>
            <person name="Ballesta J.P.G."/>
            <person name="Banrevi A."/>
            <person name="Bolle P.-A."/>
            <person name="Bolotin-Fukuhara M."/>
            <person name="Bossier P."/>
            <person name="Bou G."/>
            <person name="Boyer J."/>
            <person name="Buitrago M.J."/>
            <person name="Cheret G."/>
            <person name="Colleaux L."/>
            <person name="Daignan-Fornier B."/>
            <person name="del Rey F."/>
            <person name="Dion C."/>
            <person name="Domdey H."/>
            <person name="Duesterhoeft A."/>
            <person name="Duesterhus S."/>
            <person name="Entian K.-D."/>
            <person name="Erfle H."/>
            <person name="Esteban P.F."/>
            <person name="Feldmann H."/>
            <person name="Fernandes L."/>
            <person name="Fobo G.M."/>
            <person name="Fritz C."/>
            <person name="Fukuhara H."/>
            <person name="Gabel C."/>
            <person name="Gaillon L."/>
            <person name="Garcia-Cantalejo J.M."/>
            <person name="Garcia-Ramirez J.J."/>
            <person name="Gent M.E."/>
            <person name="Ghazvini M."/>
            <person name="Goffeau A."/>
            <person name="Gonzalez A."/>
            <person name="Grothues D."/>
            <person name="Guerreiro P."/>
            <person name="Hegemann J.H."/>
            <person name="Hewitt N."/>
            <person name="Hilger F."/>
            <person name="Hollenberg C.P."/>
            <person name="Horaitis O."/>
            <person name="Indge K.J."/>
            <person name="Jacquier A."/>
            <person name="James C.M."/>
            <person name="Jauniaux J.-C."/>
            <person name="Jimenez A."/>
            <person name="Keuchel H."/>
            <person name="Kirchrath L."/>
            <person name="Kleine K."/>
            <person name="Koetter P."/>
            <person name="Legrain P."/>
            <person name="Liebl S."/>
            <person name="Louis E.J."/>
            <person name="Maia e Silva A."/>
            <person name="Marck C."/>
            <person name="Monnier A.-L."/>
            <person name="Moestl D."/>
            <person name="Mueller S."/>
            <person name="Obermaier B."/>
            <person name="Oliver S.G."/>
            <person name="Pallier C."/>
            <person name="Pascolo S."/>
            <person name="Pfeiffer F."/>
            <person name="Philippsen P."/>
            <person name="Planta R.J."/>
            <person name="Pohl F.M."/>
            <person name="Pohl T.M."/>
            <person name="Poehlmann R."/>
            <person name="Portetelle D."/>
            <person name="Purnelle B."/>
            <person name="Puzos V."/>
            <person name="Ramezani Rad M."/>
            <person name="Rasmussen S.W."/>
            <person name="Remacha M.A."/>
            <person name="Revuelta J.L."/>
            <person name="Richard G.-F."/>
            <person name="Rieger M."/>
            <person name="Rodrigues-Pousada C."/>
            <person name="Rose M."/>
            <person name="Rupp T."/>
            <person name="Santos M.A."/>
            <person name="Schwager C."/>
            <person name="Sensen C."/>
            <person name="Skala J."/>
            <person name="Soares H."/>
            <person name="Sor F."/>
            <person name="Stegemann J."/>
            <person name="Tettelin H."/>
            <person name="Thierry A."/>
            <person name="Tzermia M."/>
            <person name="Urrestarazu L.A."/>
            <person name="van Dyck L."/>
            <person name="van Vliet-Reedijk J.C."/>
            <person name="Valens M."/>
            <person name="Vandenbol M."/>
            <person name="Vilela C."/>
            <person name="Vissers S."/>
            <person name="von Wettstein D."/>
            <person name="Voss H."/>
            <person name="Wiemann S."/>
            <person name="Xu G."/>
            <person name="Zimmermann J."/>
            <person name="Haasemann M."/>
            <person name="Becker I."/>
            <person name="Mewes H.-W."/>
        </authorList>
    </citation>
    <scope>NUCLEOTIDE SEQUENCE [LARGE SCALE GENOMIC DNA]</scope>
    <source>
        <strain>ATCC 204508 / S288c</strain>
    </source>
</reference>
<reference key="2">
    <citation type="journal article" date="2014" name="G3 (Bethesda)">
        <title>The reference genome sequence of Saccharomyces cerevisiae: Then and now.</title>
        <authorList>
            <person name="Engel S.R."/>
            <person name="Dietrich F.S."/>
            <person name="Fisk D.G."/>
            <person name="Binkley G."/>
            <person name="Balakrishnan R."/>
            <person name="Costanzo M.C."/>
            <person name="Dwight S.S."/>
            <person name="Hitz B.C."/>
            <person name="Karra K."/>
            <person name="Nash R.S."/>
            <person name="Weng S."/>
            <person name="Wong E.D."/>
            <person name="Lloyd P."/>
            <person name="Skrzypek M.S."/>
            <person name="Miyasato S.R."/>
            <person name="Simison M."/>
            <person name="Cherry J.M."/>
        </authorList>
    </citation>
    <scope>GENOME REANNOTATION</scope>
    <source>
        <strain>ATCC 204508 / S288c</strain>
    </source>
</reference>
<reference key="3">
    <citation type="journal article" date="2007" name="Genome Res.">
        <title>Approaching a complete repository of sequence-verified protein-encoding clones for Saccharomyces cerevisiae.</title>
        <authorList>
            <person name="Hu Y."/>
            <person name="Rolfs A."/>
            <person name="Bhullar B."/>
            <person name="Murthy T.V.S."/>
            <person name="Zhu C."/>
            <person name="Berger M.F."/>
            <person name="Camargo A.A."/>
            <person name="Kelley F."/>
            <person name="McCarron S."/>
            <person name="Jepson D."/>
            <person name="Richardson A."/>
            <person name="Raphael J."/>
            <person name="Moreira D."/>
            <person name="Taycher E."/>
            <person name="Zuo D."/>
            <person name="Mohr S."/>
            <person name="Kane M.F."/>
            <person name="Williamson J."/>
            <person name="Simpson A.J.G."/>
            <person name="Bulyk M.L."/>
            <person name="Harlow E."/>
            <person name="Marsischky G."/>
            <person name="Kolodner R.D."/>
            <person name="LaBaer J."/>
        </authorList>
    </citation>
    <scope>NUCLEOTIDE SEQUENCE [GENOMIC DNA]</scope>
    <source>
        <strain>ATCC 204508 / S288c</strain>
    </source>
</reference>
<reference key="4">
    <citation type="journal article" date="2003" name="Nature">
        <title>Global analysis of protein localization in budding yeast.</title>
        <authorList>
            <person name="Huh W.-K."/>
            <person name="Falvo J.V."/>
            <person name="Gerke L.C."/>
            <person name="Carroll A.S."/>
            <person name="Howson R.W."/>
            <person name="Weissman J.S."/>
            <person name="O'Shea E.K."/>
        </authorList>
    </citation>
    <scope>SUBCELLULAR LOCATION [LARGE SCALE ANALYSIS]</scope>
</reference>
<reference key="5">
    <citation type="journal article" date="2003" name="Nature">
        <title>Global analysis of protein expression in yeast.</title>
        <authorList>
            <person name="Ghaemmaghami S."/>
            <person name="Huh W.-K."/>
            <person name="Bower K."/>
            <person name="Howson R.W."/>
            <person name="Belle A."/>
            <person name="Dephoure N."/>
            <person name="O'Shea E.K."/>
            <person name="Weissman J.S."/>
        </authorList>
    </citation>
    <scope>LEVEL OF PROTEIN EXPRESSION [LARGE SCALE ANALYSIS]</scope>
</reference>
<reference key="6">
    <citation type="journal article" date="2003" name="Proc. Natl. Acad. Sci. U.S.A.">
        <title>The proteome of Saccharomyces cerevisiae mitochondria.</title>
        <authorList>
            <person name="Sickmann A."/>
            <person name="Reinders J."/>
            <person name="Wagner Y."/>
            <person name="Joppich C."/>
            <person name="Zahedi R.P."/>
            <person name="Meyer H.E."/>
            <person name="Schoenfisch B."/>
            <person name="Perschil I."/>
            <person name="Chacinska A."/>
            <person name="Guiard B."/>
            <person name="Rehling P."/>
            <person name="Pfanner N."/>
            <person name="Meisinger C."/>
        </authorList>
    </citation>
    <scope>SUBCELLULAR LOCATION [LARGE SCALE ANALYSIS]</scope>
    <source>
        <strain>ATCC 76625 / YPH499</strain>
    </source>
</reference>
<reference key="7">
    <citation type="journal article" date="2005" name="J. Biochem. Mol. Biol.">
        <title>Solution structure of YKR049C, a putative redox protein from Saccharomyces cerevisiae.</title>
        <authorList>
            <person name="Jung J.-W."/>
            <person name="Yee A."/>
            <person name="Wu B."/>
            <person name="Arrowsmith C.H."/>
            <person name="Lee W."/>
        </authorList>
    </citation>
    <scope>STRUCTURE BY NMR</scope>
    <scope>PUTATIVE FUNCTION</scope>
</reference>
<organism>
    <name type="scientific">Saccharomyces cerevisiae (strain ATCC 204508 / S288c)</name>
    <name type="common">Baker's yeast</name>
    <dbReference type="NCBI Taxonomy" id="559292"/>
    <lineage>
        <taxon>Eukaryota</taxon>
        <taxon>Fungi</taxon>
        <taxon>Dikarya</taxon>
        <taxon>Ascomycota</taxon>
        <taxon>Saccharomycotina</taxon>
        <taxon>Saccharomycetes</taxon>
        <taxon>Saccharomycetales</taxon>
        <taxon>Saccharomycetaceae</taxon>
        <taxon>Saccharomyces</taxon>
    </lineage>
</organism>